<protein>
    <recommendedName>
        <fullName evidence="1">L-lactate dehydrogenase 2</fullName>
        <shortName evidence="1">L-LDH 2</shortName>
        <ecNumber evidence="1">1.1.1.27</ecNumber>
    </recommendedName>
</protein>
<feature type="chain" id="PRO_0000237537" description="L-lactate dehydrogenase 2">
    <location>
        <begin position="1"/>
        <end position="314"/>
    </location>
</feature>
<feature type="active site" description="Proton acceptor" evidence="1">
    <location>
        <position position="178"/>
    </location>
</feature>
<feature type="binding site" evidence="1">
    <location>
        <position position="16"/>
    </location>
    <ligand>
        <name>NAD(+)</name>
        <dbReference type="ChEBI" id="CHEBI:57540"/>
    </ligand>
</feature>
<feature type="binding site" evidence="1">
    <location>
        <position position="37"/>
    </location>
    <ligand>
        <name>NAD(+)</name>
        <dbReference type="ChEBI" id="CHEBI:57540"/>
    </ligand>
</feature>
<feature type="binding site" evidence="1">
    <location>
        <position position="42"/>
    </location>
    <ligand>
        <name>NAD(+)</name>
        <dbReference type="ChEBI" id="CHEBI:57540"/>
    </ligand>
</feature>
<feature type="binding site" evidence="1">
    <location>
        <position position="68"/>
    </location>
    <ligand>
        <name>NAD(+)</name>
        <dbReference type="ChEBI" id="CHEBI:57540"/>
    </ligand>
</feature>
<feature type="binding site" evidence="1">
    <location>
        <begin position="82"/>
        <end position="83"/>
    </location>
    <ligand>
        <name>NAD(+)</name>
        <dbReference type="ChEBI" id="CHEBI:57540"/>
    </ligand>
</feature>
<feature type="binding site" evidence="1">
    <location>
        <position position="85"/>
    </location>
    <ligand>
        <name>substrate</name>
    </ligand>
</feature>
<feature type="binding site" evidence="1">
    <location>
        <position position="91"/>
    </location>
    <ligand>
        <name>substrate</name>
    </ligand>
</feature>
<feature type="binding site" evidence="1">
    <location>
        <begin position="121"/>
        <end position="123"/>
    </location>
    <ligand>
        <name>NAD(+)</name>
        <dbReference type="ChEBI" id="CHEBI:57540"/>
    </ligand>
</feature>
<feature type="binding site" evidence="1">
    <location>
        <begin position="123"/>
        <end position="126"/>
    </location>
    <ligand>
        <name>substrate</name>
    </ligand>
</feature>
<feature type="binding site" evidence="1">
    <location>
        <position position="146"/>
    </location>
    <ligand>
        <name>NAD(+)</name>
        <dbReference type="ChEBI" id="CHEBI:57540"/>
    </ligand>
</feature>
<feature type="binding site" evidence="1">
    <location>
        <begin position="151"/>
        <end position="154"/>
    </location>
    <ligand>
        <name>substrate</name>
    </ligand>
</feature>
<feature type="binding site" evidence="1">
    <location>
        <position position="156"/>
    </location>
    <ligand>
        <name>beta-D-fructose 1,6-bisphosphate</name>
        <dbReference type="ChEBI" id="CHEBI:32966"/>
        <note>allosteric activator</note>
    </ligand>
</feature>
<feature type="binding site" evidence="1">
    <location>
        <position position="171"/>
    </location>
    <ligand>
        <name>beta-D-fructose 1,6-bisphosphate</name>
        <dbReference type="ChEBI" id="CHEBI:32966"/>
        <note>allosteric activator</note>
    </ligand>
</feature>
<feature type="binding site" evidence="1">
    <location>
        <position position="232"/>
    </location>
    <ligand>
        <name>substrate</name>
    </ligand>
</feature>
<feature type="modified residue" description="Phosphotyrosine" evidence="1">
    <location>
        <position position="223"/>
    </location>
</feature>
<name>LDH2_BACCZ</name>
<keyword id="KW-0021">Allosteric enzyme</keyword>
<keyword id="KW-0963">Cytoplasm</keyword>
<keyword id="KW-0520">NAD</keyword>
<keyword id="KW-0560">Oxidoreductase</keyword>
<keyword id="KW-0597">Phosphoprotein</keyword>
<reference key="1">
    <citation type="journal article" date="2006" name="J. Bacteriol.">
        <title>Pathogenomic sequence analysis of Bacillus cereus and Bacillus thuringiensis isolates closely related to Bacillus anthracis.</title>
        <authorList>
            <person name="Han C.S."/>
            <person name="Xie G."/>
            <person name="Challacombe J.F."/>
            <person name="Altherr M.R."/>
            <person name="Bhotika S.S."/>
            <person name="Bruce D."/>
            <person name="Campbell C.S."/>
            <person name="Campbell M.L."/>
            <person name="Chen J."/>
            <person name="Chertkov O."/>
            <person name="Cleland C."/>
            <person name="Dimitrijevic M."/>
            <person name="Doggett N.A."/>
            <person name="Fawcett J.J."/>
            <person name="Glavina T."/>
            <person name="Goodwin L.A."/>
            <person name="Hill K.K."/>
            <person name="Hitchcock P."/>
            <person name="Jackson P.J."/>
            <person name="Keim P."/>
            <person name="Kewalramani A.R."/>
            <person name="Longmire J."/>
            <person name="Lucas S."/>
            <person name="Malfatti S."/>
            <person name="McMurry K."/>
            <person name="Meincke L.J."/>
            <person name="Misra M."/>
            <person name="Moseman B.L."/>
            <person name="Mundt M."/>
            <person name="Munk A.C."/>
            <person name="Okinaka R.T."/>
            <person name="Parson-Quintana B."/>
            <person name="Reilly L.P."/>
            <person name="Richardson P."/>
            <person name="Robinson D.L."/>
            <person name="Rubin E."/>
            <person name="Saunders E."/>
            <person name="Tapia R."/>
            <person name="Tesmer J.G."/>
            <person name="Thayer N."/>
            <person name="Thompson L.S."/>
            <person name="Tice H."/>
            <person name="Ticknor L.O."/>
            <person name="Wills P.L."/>
            <person name="Brettin T.S."/>
            <person name="Gilna P."/>
        </authorList>
    </citation>
    <scope>NUCLEOTIDE SEQUENCE [LARGE SCALE GENOMIC DNA]</scope>
    <source>
        <strain>ZK / E33L</strain>
    </source>
</reference>
<organism>
    <name type="scientific">Bacillus cereus (strain ZK / E33L)</name>
    <dbReference type="NCBI Taxonomy" id="288681"/>
    <lineage>
        <taxon>Bacteria</taxon>
        <taxon>Bacillati</taxon>
        <taxon>Bacillota</taxon>
        <taxon>Bacilli</taxon>
        <taxon>Bacillales</taxon>
        <taxon>Bacillaceae</taxon>
        <taxon>Bacillus</taxon>
        <taxon>Bacillus cereus group</taxon>
    </lineage>
</organism>
<gene>
    <name evidence="1" type="primary">ldh2</name>
    <name type="ordered locus">BCE33L4624</name>
</gene>
<comment type="function">
    <text evidence="1">Catalyzes the conversion of lactate to pyruvate.</text>
</comment>
<comment type="catalytic activity">
    <reaction evidence="1">
        <text>(S)-lactate + NAD(+) = pyruvate + NADH + H(+)</text>
        <dbReference type="Rhea" id="RHEA:23444"/>
        <dbReference type="ChEBI" id="CHEBI:15361"/>
        <dbReference type="ChEBI" id="CHEBI:15378"/>
        <dbReference type="ChEBI" id="CHEBI:16651"/>
        <dbReference type="ChEBI" id="CHEBI:57540"/>
        <dbReference type="ChEBI" id="CHEBI:57945"/>
        <dbReference type="EC" id="1.1.1.27"/>
    </reaction>
</comment>
<comment type="activity regulation">
    <text evidence="1">Allosterically activated by fructose 1,6-bisphosphate (FBP).</text>
</comment>
<comment type="pathway">
    <text evidence="1">Fermentation; pyruvate fermentation to lactate; (S)-lactate from pyruvate: step 1/1.</text>
</comment>
<comment type="subunit">
    <text evidence="1">Homotetramer.</text>
</comment>
<comment type="subcellular location">
    <subcellularLocation>
        <location evidence="1">Cytoplasm</location>
    </subcellularLocation>
</comment>
<comment type="similarity">
    <text evidence="1">Belongs to the LDH/MDH superfamily. LDH family.</text>
</comment>
<dbReference type="EC" id="1.1.1.27" evidence="1"/>
<dbReference type="EMBL" id="CP000001">
    <property type="protein sequence ID" value="AAU15649.1"/>
    <property type="molecule type" value="Genomic_DNA"/>
</dbReference>
<dbReference type="RefSeq" id="WP_000715339.1">
    <property type="nucleotide sequence ID" value="NZ_CP009968.1"/>
</dbReference>
<dbReference type="SMR" id="Q632G8"/>
<dbReference type="KEGG" id="bcz:BCE33L4624"/>
<dbReference type="PATRIC" id="fig|288681.22.peg.736"/>
<dbReference type="UniPathway" id="UPA00554">
    <property type="reaction ID" value="UER00611"/>
</dbReference>
<dbReference type="Proteomes" id="UP000002612">
    <property type="component" value="Chromosome"/>
</dbReference>
<dbReference type="GO" id="GO:0005737">
    <property type="term" value="C:cytoplasm"/>
    <property type="evidence" value="ECO:0007669"/>
    <property type="project" value="UniProtKB-SubCell"/>
</dbReference>
<dbReference type="GO" id="GO:0004459">
    <property type="term" value="F:L-lactate dehydrogenase activity"/>
    <property type="evidence" value="ECO:0007669"/>
    <property type="project" value="UniProtKB-UniRule"/>
</dbReference>
<dbReference type="GO" id="GO:0006096">
    <property type="term" value="P:glycolytic process"/>
    <property type="evidence" value="ECO:0007669"/>
    <property type="project" value="UniProtKB-UniRule"/>
</dbReference>
<dbReference type="GO" id="GO:0006089">
    <property type="term" value="P:lactate metabolic process"/>
    <property type="evidence" value="ECO:0007669"/>
    <property type="project" value="TreeGrafter"/>
</dbReference>
<dbReference type="CDD" id="cd05291">
    <property type="entry name" value="HicDH_like"/>
    <property type="match status" value="1"/>
</dbReference>
<dbReference type="FunFam" id="3.90.110.10:FF:000005">
    <property type="entry name" value="L-lactate dehydrogenase"/>
    <property type="match status" value="1"/>
</dbReference>
<dbReference type="FunFam" id="3.40.50.720:FF:000018">
    <property type="entry name" value="Malate dehydrogenase"/>
    <property type="match status" value="1"/>
</dbReference>
<dbReference type="Gene3D" id="3.90.110.10">
    <property type="entry name" value="Lactate dehydrogenase/glycoside hydrolase, family 4, C-terminal"/>
    <property type="match status" value="1"/>
</dbReference>
<dbReference type="Gene3D" id="3.40.50.720">
    <property type="entry name" value="NAD(P)-binding Rossmann-like Domain"/>
    <property type="match status" value="1"/>
</dbReference>
<dbReference type="HAMAP" id="MF_00488">
    <property type="entry name" value="Lactate_dehydrog"/>
    <property type="match status" value="1"/>
</dbReference>
<dbReference type="InterPro" id="IPR001557">
    <property type="entry name" value="L-lactate/malate_DH"/>
</dbReference>
<dbReference type="InterPro" id="IPR011304">
    <property type="entry name" value="L-lactate_DH"/>
</dbReference>
<dbReference type="InterPro" id="IPR018177">
    <property type="entry name" value="L-lactate_DH_AS"/>
</dbReference>
<dbReference type="InterPro" id="IPR022383">
    <property type="entry name" value="Lactate/malate_DH_C"/>
</dbReference>
<dbReference type="InterPro" id="IPR001236">
    <property type="entry name" value="Lactate/malate_DH_N"/>
</dbReference>
<dbReference type="InterPro" id="IPR015955">
    <property type="entry name" value="Lactate_DH/Glyco_Ohase_4_C"/>
</dbReference>
<dbReference type="InterPro" id="IPR036291">
    <property type="entry name" value="NAD(P)-bd_dom_sf"/>
</dbReference>
<dbReference type="NCBIfam" id="TIGR01771">
    <property type="entry name" value="L-LDH-NAD"/>
    <property type="match status" value="1"/>
</dbReference>
<dbReference type="NCBIfam" id="NF000824">
    <property type="entry name" value="PRK00066.1"/>
    <property type="match status" value="1"/>
</dbReference>
<dbReference type="NCBIfam" id="NF004863">
    <property type="entry name" value="PRK06223.1"/>
    <property type="match status" value="1"/>
</dbReference>
<dbReference type="PANTHER" id="PTHR43128">
    <property type="entry name" value="L-2-HYDROXYCARBOXYLATE DEHYDROGENASE (NAD(P)(+))"/>
    <property type="match status" value="1"/>
</dbReference>
<dbReference type="PANTHER" id="PTHR43128:SF16">
    <property type="entry name" value="L-LACTATE DEHYDROGENASE"/>
    <property type="match status" value="1"/>
</dbReference>
<dbReference type="Pfam" id="PF02866">
    <property type="entry name" value="Ldh_1_C"/>
    <property type="match status" value="1"/>
</dbReference>
<dbReference type="Pfam" id="PF00056">
    <property type="entry name" value="Ldh_1_N"/>
    <property type="match status" value="1"/>
</dbReference>
<dbReference type="PIRSF" id="PIRSF000102">
    <property type="entry name" value="Lac_mal_DH"/>
    <property type="match status" value="1"/>
</dbReference>
<dbReference type="PRINTS" id="PR00086">
    <property type="entry name" value="LLDHDRGNASE"/>
</dbReference>
<dbReference type="SUPFAM" id="SSF56327">
    <property type="entry name" value="LDH C-terminal domain-like"/>
    <property type="match status" value="1"/>
</dbReference>
<dbReference type="SUPFAM" id="SSF51735">
    <property type="entry name" value="NAD(P)-binding Rossmann-fold domains"/>
    <property type="match status" value="1"/>
</dbReference>
<dbReference type="PROSITE" id="PS00064">
    <property type="entry name" value="L_LDH"/>
    <property type="match status" value="1"/>
</dbReference>
<sequence>MKKGINRVVLVGTGAVGCSYAYSMINQGVAEEFVLVDVNEAKAEGEAMDLSHAVPFSPSPTKVWSGSYADCKDADLVVITAGLPQKPGETRLDLVEKNTKIFKQIVRGIMDSGFDGIFLIATNPVDILTYVTWKESGLPKERVIGSGTTLDSARFRYMLGDYLDVDPRNVHAYIVGEHGDTELPVWSHATIGVQKLETILANNEQYKQEDLDKIFENVRDAAYHIIERKGATYYGIGMSLLRVTKAILNNENSVLTVSAYLEGQYGEKDAYVGVPAVINREGVREIVELELNEEEKAKFAHSVKVLKETMAPVL</sequence>
<accession>Q632G8</accession>
<proteinExistence type="inferred from homology"/>
<evidence type="ECO:0000255" key="1">
    <source>
        <dbReference type="HAMAP-Rule" id="MF_00488"/>
    </source>
</evidence>